<keyword id="KW-0002">3D-structure</keyword>
<keyword id="KW-0007">Acetylation</keyword>
<keyword id="KW-0238">DNA-binding</keyword>
<keyword id="KW-1048">Host nucleus</keyword>
<keyword id="KW-0945">Host-virus interaction</keyword>
<keyword id="KW-0426">Late protein</keyword>
<keyword id="KW-0597">Phosphoprotein</keyword>
<keyword id="KW-1185">Reference proteome</keyword>
<keyword id="KW-1163">Viral penetration into host nucleus</keyword>
<keyword id="KW-0946">Virion</keyword>
<keyword id="KW-1160">Virus entry into host cell</keyword>
<reference key="1">
    <citation type="journal article" date="1992" name="Virology">
        <title>The sequence of the genome of adenovirus type 5 and its comparison with the genome of adenovirus type 2.</title>
        <authorList>
            <person name="Chroboczek J."/>
            <person name="Bieber F."/>
            <person name="Jacrot B."/>
        </authorList>
    </citation>
    <scope>NUCLEOTIDE SEQUENCE [GENOMIC DNA]</scope>
</reference>
<reference key="2">
    <citation type="journal article" date="1988" name="Gene">
        <title>Determination of the nucleotide sequence for the penton-base gene of human adenovirus type 5.</title>
        <authorList>
            <person name="Neumann R."/>
            <person name="Chroboczek J."/>
            <person name="Jacrot B."/>
        </authorList>
    </citation>
    <scope>NUCLEOTIDE SEQUENCE [GENOMIC DNA] OF 1-136</scope>
</reference>
<reference key="3">
    <citation type="journal article" date="2012" name="Nat. Methods">
        <title>De novo derivation of proteomes from transcriptomes for transcript and protein identification.</title>
        <authorList>
            <person name="Evans V.C."/>
            <person name="Barker G."/>
            <person name="Heesom K.J."/>
            <person name="Fan J."/>
            <person name="Bessant C."/>
            <person name="Matthews D.A."/>
        </authorList>
    </citation>
    <scope>NUCLEOTIDE SEQUENCE [MRNA]</scope>
</reference>
<reference key="4">
    <citation type="journal article" date="1982" name="J. Gen. Virol.">
        <title>Nucleic acid-binding properties of adenovirus structural polypeptides.</title>
        <authorList>
            <person name="Russell W.C."/>
            <person name="Precious B."/>
        </authorList>
    </citation>
    <scope>DNA-BINDING</scope>
</reference>
<reference key="5">
    <citation type="journal article" date="2012" name="Viruses">
        <title>Latest insights on adenovirus structure and assembly.</title>
        <authorList>
            <person name="San Martin C."/>
        </authorList>
    </citation>
    <scope>REVIEW</scope>
</reference>
<reference key="6">
    <citation type="journal article" date="2012" name="Nucleic Acids Res.">
        <title>Chromatin structure of adenovirus DNA throughout infection.</title>
        <authorList>
            <person name="Giberson A.N."/>
            <person name="Davidson A.R."/>
            <person name="Parks R.J."/>
        </authorList>
    </citation>
    <scope>REVIEW</scope>
</reference>
<proteinExistence type="evidence at protein level"/>
<gene>
    <name evidence="1" type="primary">L2</name>
</gene>
<organismHost>
    <name type="scientific">Homo sapiens</name>
    <name type="common">Human</name>
    <dbReference type="NCBI Taxonomy" id="9606"/>
</organismHost>
<feature type="initiator methionine" description="Removed" evidence="1">
    <location>
        <position position="1"/>
    </location>
</feature>
<feature type="chain" id="PRO_0000421134" description="Pre-histone-like nucleoprotein" evidence="1">
    <location>
        <begin position="2"/>
        <end position="198"/>
    </location>
</feature>
<feature type="propeptide" id="PRO_0000036579" evidence="1">
    <location>
        <begin position="2"/>
        <end position="24"/>
    </location>
</feature>
<feature type="chain" id="PRO_0000036580" description="Histone-like nucleoprotein" evidence="1">
    <location>
        <begin position="25"/>
        <end position="198"/>
    </location>
</feature>
<feature type="region of interest" description="Disordered" evidence="2">
    <location>
        <begin position="24"/>
        <end position="55"/>
    </location>
</feature>
<feature type="short sequence motif" description="Nuclear localization signal" evidence="1">
    <location>
        <begin position="188"/>
        <end position="198"/>
    </location>
</feature>
<feature type="compositionally biased region" description="Basic residues" evidence="2">
    <location>
        <begin position="34"/>
        <end position="52"/>
    </location>
</feature>
<feature type="site" description="Cleavage; by viral protease" evidence="1">
    <location>
        <begin position="24"/>
        <end position="25"/>
    </location>
</feature>
<feature type="modified residue" description="N-acetylserine; by host" evidence="1">
    <location>
        <position position="2"/>
    </location>
</feature>
<feature type="modified residue" description="N6-acetyllysine; by host" evidence="1">
    <location>
        <position position="27"/>
    </location>
</feature>
<feature type="modified residue" description="N6-acetyllysine; by host" evidence="1">
    <location>
        <position position="48"/>
    </location>
</feature>
<feature type="modified residue" description="Phosphothreonine; by host" evidence="1">
    <location>
        <position position="55"/>
    </location>
</feature>
<feature type="modified residue" description="Phosphothreonine; by host" evidence="1">
    <location>
        <position position="74"/>
    </location>
</feature>
<feature type="modified residue" description="Phosphoserine; by host" evidence="1">
    <location>
        <position position="183"/>
    </location>
</feature>
<feature type="modified residue" description="Phosphoserine; by host" evidence="1">
    <location>
        <position position="185"/>
    </location>
</feature>
<accession>P68951</accession>
<accession>P03266</accession>
<accession>P12542</accession>
<comment type="function">
    <text evidence="1">Plays a role in the inhibition of host immune response within the nucleus. Interacts with cellular nucleosomes and immobilizes the host immune danger signal HMGB1 on chromatin. In turn, prevents HMGB1 release out of the cell and thus decreases inflammation. Also plays a role in the wrapping and condensation of the viral DNA. May also promote viral genome import into the nucleus.</text>
</comment>
<comment type="subunit">
    <text evidence="1">Interacts with the core-capsid bridging protein; this interaction bridges the virus core to the capsid. Interacts with host NPM1; this interaction might play a role in placing the pre-histone-like nucleoprotein on the viral DNA or regulating viral gene expression. Interacts with host HMGB1; this interaction inhibits host immune response.</text>
</comment>
<comment type="interaction">
    <interactant intactId="EBI-7481182">
        <id>P68951</id>
    </interactant>
    <interactant intactId="EBI-78579">
        <id>P06748</id>
        <label>NPM1</label>
    </interactant>
    <organismsDiffer>true</organismsDiffer>
    <experiments>5</experiments>
</comment>
<comment type="subcellular location">
    <molecule>Histone-like nucleoprotein</molecule>
    <subcellularLocation>
        <location evidence="1">Virion</location>
    </subcellularLocation>
    <text evidence="1">Located inside the capsid in association with the viral DNA (core). Present in about 1070 copies per virion.</text>
</comment>
<comment type="subcellular location">
    <molecule>Pre-histone-like nucleoprotein</molecule>
    <subcellularLocation>
        <location evidence="1">Host nucleus</location>
        <location evidence="1">Host nucleolus</location>
    </subcellularLocation>
</comment>
<comment type="induction">
    <text evidence="1">Expressed in the late phase of the viral replicative cycle.</text>
</comment>
<comment type="PTM">
    <text evidence="1">Cleaved near the N-terminus by the viral protease during virion maturation to form the mature protein.</text>
</comment>
<comment type="miscellaneous">
    <text evidence="1">All late proteins expressed from the major late promoter are produced by alternative splicing and alternative polyadenylation of the same gene giving rise to non-overlapping ORFs. A leader sequence is present in the N-terminus of all these mRNAs and is recognized by the viral shutoff protein to provide expression although conventional translation via ribosome scanning from the cap has been shut off in the host cell.</text>
</comment>
<comment type="similarity">
    <text evidence="1 3">Belongs to the adenoviridae histone-like nucleoprotein family.</text>
</comment>
<comment type="sequence caution" evidence="3">
    <conflict type="erroneous initiation">
        <sequence resource="EMBL-CDS" id="AAA96408"/>
    </conflict>
    <text>Truncated N-terminus.</text>
</comment>
<name>NP_ADE05</name>
<protein>
    <recommendedName>
        <fullName evidence="1">Pre-histone-like nucleoprotein</fullName>
    </recommendedName>
    <alternativeName>
        <fullName evidence="1">Pre-core protein VII</fullName>
        <shortName evidence="1">pVII</shortName>
    </alternativeName>
    <component>
        <recommendedName>
            <fullName evidence="1">Histone-like nucleoprotein</fullName>
            <shortName evidence="1">NP</shortName>
        </recommendedName>
        <alternativeName>
            <fullName evidence="1">Core protein VII</fullName>
        </alternativeName>
    </component>
</protein>
<dbReference type="EMBL" id="M73260">
    <property type="protein sequence ID" value="AAA96408.1"/>
    <property type="status" value="ALT_INIT"/>
    <property type="molecule type" value="Genomic_DNA"/>
</dbReference>
<dbReference type="EMBL" id="M22141">
    <property type="protein sequence ID" value="AAA42520.1"/>
    <property type="molecule type" value="Genomic_DNA"/>
</dbReference>
<dbReference type="RefSeq" id="AP_000207.1">
    <property type="nucleotide sequence ID" value="AC_000008.1"/>
</dbReference>
<dbReference type="PDB" id="6B1T">
    <property type="method" value="EM"/>
    <property type="resolution" value="3.20 A"/>
    <property type="chains" value="W=14-24"/>
</dbReference>
<dbReference type="PDBsum" id="6B1T"/>
<dbReference type="EMDB" id="EMD-7034"/>
<dbReference type="SMR" id="P68951"/>
<dbReference type="DIP" id="DIP-44057N"/>
<dbReference type="IntAct" id="P68951">
    <property type="interactions" value="3"/>
</dbReference>
<dbReference type="MINT" id="P68951"/>
<dbReference type="Proteomes" id="UP000004992">
    <property type="component" value="Genome"/>
</dbReference>
<dbReference type="GO" id="GO:0043657">
    <property type="term" value="C:host cell"/>
    <property type="evidence" value="ECO:0007669"/>
    <property type="project" value="GOC"/>
</dbReference>
<dbReference type="GO" id="GO:0044196">
    <property type="term" value="C:host cell nucleolus"/>
    <property type="evidence" value="ECO:0007669"/>
    <property type="project" value="UniProtKB-SubCell"/>
</dbReference>
<dbReference type="GO" id="GO:0019028">
    <property type="term" value="C:viral capsid"/>
    <property type="evidence" value="ECO:0007669"/>
    <property type="project" value="InterPro"/>
</dbReference>
<dbReference type="GO" id="GO:0003677">
    <property type="term" value="F:DNA binding"/>
    <property type="evidence" value="ECO:0007669"/>
    <property type="project" value="UniProtKB-UniRule"/>
</dbReference>
<dbReference type="GO" id="GO:0046718">
    <property type="term" value="P:symbiont entry into host cell"/>
    <property type="evidence" value="ECO:0007669"/>
    <property type="project" value="UniProtKB-UniRule"/>
</dbReference>
<dbReference type="GO" id="GO:0075732">
    <property type="term" value="P:viral penetration into host nucleus"/>
    <property type="evidence" value="ECO:0007669"/>
    <property type="project" value="UniProtKB-UniRule"/>
</dbReference>
<dbReference type="HAMAP" id="MF_04056">
    <property type="entry name" value="ADV_PVII"/>
    <property type="match status" value="1"/>
</dbReference>
<dbReference type="InterPro" id="IPR004912">
    <property type="entry name" value="Adeno_VII"/>
</dbReference>
<dbReference type="Pfam" id="PF03228">
    <property type="entry name" value="Adeno_VII"/>
    <property type="match status" value="1"/>
</dbReference>
<sequence>MSILISPSNNTGWGLRFPSKMFGGAKKRSDQHPVRVRGHYRAPWGAHKRGRTGRTTVDDAIDAVVEEARNYTPTPPPVSTVDAAIQTVVRGARRYAKMKRRRRRVARRHRRRPGTAAQRAAAALLNRARRTGRRAAMRAARRLAAGIVTVPPRSRRRAAAAAAAAISAMTQGRRGNVYWVRDSVSGLRVPVRTRPPRN</sequence>
<organism>
    <name type="scientific">Human adenovirus C serotype 5</name>
    <name type="common">HAdV-5</name>
    <name type="synonym">Human adenovirus 5</name>
    <dbReference type="NCBI Taxonomy" id="28285"/>
    <lineage>
        <taxon>Viruses</taxon>
        <taxon>Varidnaviria</taxon>
        <taxon>Bamfordvirae</taxon>
        <taxon>Preplasmiviricota</taxon>
        <taxon>Tectiliviricetes</taxon>
        <taxon>Rowavirales</taxon>
        <taxon>Adenoviridae</taxon>
        <taxon>Mastadenovirus</taxon>
        <taxon>Human mastadenovirus C</taxon>
    </lineage>
</organism>
<evidence type="ECO:0000255" key="1">
    <source>
        <dbReference type="HAMAP-Rule" id="MF_04056"/>
    </source>
</evidence>
<evidence type="ECO:0000256" key="2">
    <source>
        <dbReference type="SAM" id="MobiDB-lite"/>
    </source>
</evidence>
<evidence type="ECO:0000305" key="3"/>